<name>SURE_NITSB</name>
<feature type="chain" id="PRO_0000335265" description="5'-nucleotidase SurE">
    <location>
        <begin position="1"/>
        <end position="258"/>
    </location>
</feature>
<feature type="binding site" evidence="1">
    <location>
        <position position="9"/>
    </location>
    <ligand>
        <name>a divalent metal cation</name>
        <dbReference type="ChEBI" id="CHEBI:60240"/>
    </ligand>
</feature>
<feature type="binding site" evidence="1">
    <location>
        <position position="10"/>
    </location>
    <ligand>
        <name>a divalent metal cation</name>
        <dbReference type="ChEBI" id="CHEBI:60240"/>
    </ligand>
</feature>
<feature type="binding site" evidence="1">
    <location>
        <position position="40"/>
    </location>
    <ligand>
        <name>a divalent metal cation</name>
        <dbReference type="ChEBI" id="CHEBI:60240"/>
    </ligand>
</feature>
<feature type="binding site" evidence="1">
    <location>
        <position position="95"/>
    </location>
    <ligand>
        <name>a divalent metal cation</name>
        <dbReference type="ChEBI" id="CHEBI:60240"/>
    </ligand>
</feature>
<comment type="function">
    <text evidence="1">Nucleotidase that shows phosphatase activity on nucleoside 5'-monophosphates.</text>
</comment>
<comment type="catalytic activity">
    <reaction evidence="1">
        <text>a ribonucleoside 5'-phosphate + H2O = a ribonucleoside + phosphate</text>
        <dbReference type="Rhea" id="RHEA:12484"/>
        <dbReference type="ChEBI" id="CHEBI:15377"/>
        <dbReference type="ChEBI" id="CHEBI:18254"/>
        <dbReference type="ChEBI" id="CHEBI:43474"/>
        <dbReference type="ChEBI" id="CHEBI:58043"/>
        <dbReference type="EC" id="3.1.3.5"/>
    </reaction>
</comment>
<comment type="cofactor">
    <cofactor evidence="1">
        <name>a divalent metal cation</name>
        <dbReference type="ChEBI" id="CHEBI:60240"/>
    </cofactor>
    <text evidence="1">Binds 1 divalent metal cation per subunit.</text>
</comment>
<comment type="subcellular location">
    <subcellularLocation>
        <location evidence="1">Cytoplasm</location>
    </subcellularLocation>
</comment>
<comment type="similarity">
    <text evidence="1">Belongs to the SurE nucleotidase family.</text>
</comment>
<organism>
    <name type="scientific">Nitratiruptor sp. (strain SB155-2)</name>
    <dbReference type="NCBI Taxonomy" id="387092"/>
    <lineage>
        <taxon>Bacteria</taxon>
        <taxon>Pseudomonadati</taxon>
        <taxon>Campylobacterota</taxon>
        <taxon>Epsilonproteobacteria</taxon>
        <taxon>Nautiliales</taxon>
        <taxon>Nitratiruptoraceae</taxon>
        <taxon>Nitratiruptor</taxon>
    </lineage>
</organism>
<sequence>MKRILITNDDGFESLGLRALIEALRDIAQLTIVVPANEKSACGHSLTLTKPLRFVEIEDNFYKLEDGTPTDCVYLALSSLYPDGEKPDIIVSGINRGANMGEDITYSGTVAGAMEGAIYDIPSIAISQVCNSNCEETEMEVGYEQAKYVARDLVEKIFQQGWPAGHRRCLNVNVPPTKEFKGYKITRAGYRVYFNQAHLHRNPRGIEYWWLGLHPLDWIPGKERDCDFEAVKEGFVSITPIKADLTAYEEIPKLKSWL</sequence>
<reference key="1">
    <citation type="journal article" date="2007" name="Proc. Natl. Acad. Sci. U.S.A.">
        <title>Deep-sea vent epsilon-proteobacterial genomes provide insights into emergence of pathogens.</title>
        <authorList>
            <person name="Nakagawa S."/>
            <person name="Takaki Y."/>
            <person name="Shimamura S."/>
            <person name="Reysenbach A.-L."/>
            <person name="Takai K."/>
            <person name="Horikoshi K."/>
        </authorList>
    </citation>
    <scope>NUCLEOTIDE SEQUENCE [LARGE SCALE GENOMIC DNA]</scope>
    <source>
        <strain>SB155-2</strain>
    </source>
</reference>
<dbReference type="EC" id="3.1.3.5" evidence="1"/>
<dbReference type="EMBL" id="AP009178">
    <property type="protein sequence ID" value="BAF70426.1"/>
    <property type="molecule type" value="Genomic_DNA"/>
</dbReference>
<dbReference type="RefSeq" id="WP_012082689.1">
    <property type="nucleotide sequence ID" value="NC_009662.1"/>
</dbReference>
<dbReference type="SMR" id="A6Q4L7"/>
<dbReference type="FunCoup" id="A6Q4L7">
    <property type="interactions" value="174"/>
</dbReference>
<dbReference type="STRING" id="387092.NIS_1318"/>
<dbReference type="KEGG" id="nis:NIS_1318"/>
<dbReference type="eggNOG" id="COG0496">
    <property type="taxonomic scope" value="Bacteria"/>
</dbReference>
<dbReference type="HOGENOM" id="CLU_045192_1_2_7"/>
<dbReference type="InParanoid" id="A6Q4L7"/>
<dbReference type="OrthoDB" id="9780815at2"/>
<dbReference type="Proteomes" id="UP000001118">
    <property type="component" value="Chromosome"/>
</dbReference>
<dbReference type="GO" id="GO:0005737">
    <property type="term" value="C:cytoplasm"/>
    <property type="evidence" value="ECO:0007669"/>
    <property type="project" value="UniProtKB-SubCell"/>
</dbReference>
<dbReference type="GO" id="GO:0008254">
    <property type="term" value="F:3'-nucleotidase activity"/>
    <property type="evidence" value="ECO:0007669"/>
    <property type="project" value="TreeGrafter"/>
</dbReference>
<dbReference type="GO" id="GO:0008253">
    <property type="term" value="F:5'-nucleotidase activity"/>
    <property type="evidence" value="ECO:0007669"/>
    <property type="project" value="UniProtKB-UniRule"/>
</dbReference>
<dbReference type="GO" id="GO:0004309">
    <property type="term" value="F:exopolyphosphatase activity"/>
    <property type="evidence" value="ECO:0007669"/>
    <property type="project" value="TreeGrafter"/>
</dbReference>
<dbReference type="GO" id="GO:0046872">
    <property type="term" value="F:metal ion binding"/>
    <property type="evidence" value="ECO:0007669"/>
    <property type="project" value="UniProtKB-UniRule"/>
</dbReference>
<dbReference type="GO" id="GO:0000166">
    <property type="term" value="F:nucleotide binding"/>
    <property type="evidence" value="ECO:0007669"/>
    <property type="project" value="UniProtKB-KW"/>
</dbReference>
<dbReference type="FunFam" id="3.40.1210.10:FF:000001">
    <property type="entry name" value="5'/3'-nucleotidase SurE"/>
    <property type="match status" value="1"/>
</dbReference>
<dbReference type="Gene3D" id="3.40.1210.10">
    <property type="entry name" value="Survival protein SurE-like phosphatase/nucleotidase"/>
    <property type="match status" value="1"/>
</dbReference>
<dbReference type="HAMAP" id="MF_00060">
    <property type="entry name" value="SurE"/>
    <property type="match status" value="1"/>
</dbReference>
<dbReference type="InterPro" id="IPR030048">
    <property type="entry name" value="SurE"/>
</dbReference>
<dbReference type="InterPro" id="IPR002828">
    <property type="entry name" value="SurE-like_Pase/nucleotidase"/>
</dbReference>
<dbReference type="InterPro" id="IPR036523">
    <property type="entry name" value="SurE-like_sf"/>
</dbReference>
<dbReference type="NCBIfam" id="NF001490">
    <property type="entry name" value="PRK00346.1-4"/>
    <property type="match status" value="1"/>
</dbReference>
<dbReference type="NCBIfam" id="NF001494">
    <property type="entry name" value="PRK00346.2-4"/>
    <property type="match status" value="1"/>
</dbReference>
<dbReference type="NCBIfam" id="TIGR00087">
    <property type="entry name" value="surE"/>
    <property type="match status" value="1"/>
</dbReference>
<dbReference type="PANTHER" id="PTHR30457">
    <property type="entry name" value="5'-NUCLEOTIDASE SURE"/>
    <property type="match status" value="1"/>
</dbReference>
<dbReference type="PANTHER" id="PTHR30457:SF12">
    <property type="entry name" value="5'_3'-NUCLEOTIDASE SURE"/>
    <property type="match status" value="1"/>
</dbReference>
<dbReference type="Pfam" id="PF01975">
    <property type="entry name" value="SurE"/>
    <property type="match status" value="1"/>
</dbReference>
<dbReference type="SUPFAM" id="SSF64167">
    <property type="entry name" value="SurE-like"/>
    <property type="match status" value="1"/>
</dbReference>
<proteinExistence type="inferred from homology"/>
<protein>
    <recommendedName>
        <fullName evidence="1">5'-nucleotidase SurE</fullName>
        <ecNumber evidence="1">3.1.3.5</ecNumber>
    </recommendedName>
    <alternativeName>
        <fullName evidence="1">Nucleoside 5'-monophosphate phosphohydrolase</fullName>
    </alternativeName>
</protein>
<keyword id="KW-0963">Cytoplasm</keyword>
<keyword id="KW-0378">Hydrolase</keyword>
<keyword id="KW-0479">Metal-binding</keyword>
<keyword id="KW-0547">Nucleotide-binding</keyword>
<keyword id="KW-1185">Reference proteome</keyword>
<gene>
    <name evidence="1" type="primary">surE</name>
    <name type="ordered locus">NIS_1318</name>
</gene>
<accession>A6Q4L7</accession>
<evidence type="ECO:0000255" key="1">
    <source>
        <dbReference type="HAMAP-Rule" id="MF_00060"/>
    </source>
</evidence>